<name>RLMKL_PSYA2</name>
<proteinExistence type="inferred from homology"/>
<accession>Q4FTN9</accession>
<evidence type="ECO:0000255" key="1">
    <source>
        <dbReference type="HAMAP-Rule" id="MF_01858"/>
    </source>
</evidence>
<comment type="function">
    <text evidence="1">Specifically methylates the guanine in position 2445 (m2G2445) and the guanine in position 2069 (m7G2069) of 23S rRNA.</text>
</comment>
<comment type="catalytic activity">
    <reaction evidence="1">
        <text>guanosine(2445) in 23S rRNA + S-adenosyl-L-methionine = N(2)-methylguanosine(2445) in 23S rRNA + S-adenosyl-L-homocysteine + H(+)</text>
        <dbReference type="Rhea" id="RHEA:42740"/>
        <dbReference type="Rhea" id="RHEA-COMP:10215"/>
        <dbReference type="Rhea" id="RHEA-COMP:10216"/>
        <dbReference type="ChEBI" id="CHEBI:15378"/>
        <dbReference type="ChEBI" id="CHEBI:57856"/>
        <dbReference type="ChEBI" id="CHEBI:59789"/>
        <dbReference type="ChEBI" id="CHEBI:74269"/>
        <dbReference type="ChEBI" id="CHEBI:74481"/>
        <dbReference type="EC" id="2.1.1.173"/>
    </reaction>
</comment>
<comment type="catalytic activity">
    <reaction evidence="1">
        <text>guanosine(2069) in 23S rRNA + S-adenosyl-L-methionine = N(2)-methylguanosine(2069) in 23S rRNA + S-adenosyl-L-homocysteine + H(+)</text>
        <dbReference type="Rhea" id="RHEA:43772"/>
        <dbReference type="Rhea" id="RHEA-COMP:10688"/>
        <dbReference type="Rhea" id="RHEA-COMP:10689"/>
        <dbReference type="ChEBI" id="CHEBI:15378"/>
        <dbReference type="ChEBI" id="CHEBI:57856"/>
        <dbReference type="ChEBI" id="CHEBI:59789"/>
        <dbReference type="ChEBI" id="CHEBI:74269"/>
        <dbReference type="ChEBI" id="CHEBI:74481"/>
        <dbReference type="EC" id="2.1.1.264"/>
    </reaction>
</comment>
<comment type="subcellular location">
    <subcellularLocation>
        <location evidence="1">Cytoplasm</location>
    </subcellularLocation>
</comment>
<comment type="similarity">
    <text evidence="1">Belongs to the methyltransferase superfamily. RlmKL family.</text>
</comment>
<dbReference type="EC" id="2.1.1.173" evidence="1"/>
<dbReference type="EC" id="2.1.1.264" evidence="1"/>
<dbReference type="EMBL" id="CP000082">
    <property type="protein sequence ID" value="AAZ18619.1"/>
    <property type="molecule type" value="Genomic_DNA"/>
</dbReference>
<dbReference type="RefSeq" id="WP_011280046.1">
    <property type="nucleotide sequence ID" value="NC_007204.1"/>
</dbReference>
<dbReference type="SMR" id="Q4FTN9"/>
<dbReference type="STRING" id="259536.Psyc_0766"/>
<dbReference type="KEGG" id="par:Psyc_0766"/>
<dbReference type="eggNOG" id="COG0116">
    <property type="taxonomic scope" value="Bacteria"/>
</dbReference>
<dbReference type="eggNOG" id="COG1092">
    <property type="taxonomic scope" value="Bacteria"/>
</dbReference>
<dbReference type="HOGENOM" id="CLU_014042_2_0_6"/>
<dbReference type="OrthoDB" id="9809404at2"/>
<dbReference type="Proteomes" id="UP000000546">
    <property type="component" value="Chromosome"/>
</dbReference>
<dbReference type="GO" id="GO:0005737">
    <property type="term" value="C:cytoplasm"/>
    <property type="evidence" value="ECO:0007669"/>
    <property type="project" value="UniProtKB-SubCell"/>
</dbReference>
<dbReference type="GO" id="GO:0052915">
    <property type="term" value="F:23S rRNA (guanine(2445)-N(2))-methyltransferase activity"/>
    <property type="evidence" value="ECO:0007669"/>
    <property type="project" value="UniProtKB-UniRule"/>
</dbReference>
<dbReference type="GO" id="GO:0003723">
    <property type="term" value="F:RNA binding"/>
    <property type="evidence" value="ECO:0007669"/>
    <property type="project" value="UniProtKB-KW"/>
</dbReference>
<dbReference type="GO" id="GO:0070043">
    <property type="term" value="F:rRNA (guanine-N7-)-methyltransferase activity"/>
    <property type="evidence" value="ECO:0007669"/>
    <property type="project" value="UniProtKB-UniRule"/>
</dbReference>
<dbReference type="CDD" id="cd02440">
    <property type="entry name" value="AdoMet_MTases"/>
    <property type="match status" value="1"/>
</dbReference>
<dbReference type="CDD" id="cd11715">
    <property type="entry name" value="THUMP_AdoMetMT"/>
    <property type="match status" value="1"/>
</dbReference>
<dbReference type="Gene3D" id="3.30.2130.30">
    <property type="match status" value="1"/>
</dbReference>
<dbReference type="Gene3D" id="3.30.750.80">
    <property type="entry name" value="RNA methyltransferase domain (HRMD) like"/>
    <property type="match status" value="1"/>
</dbReference>
<dbReference type="Gene3D" id="3.40.50.150">
    <property type="entry name" value="Vaccinia Virus protein VP39"/>
    <property type="match status" value="2"/>
</dbReference>
<dbReference type="HAMAP" id="MF_01858">
    <property type="entry name" value="23SrRNA_methyltr_KL"/>
    <property type="match status" value="1"/>
</dbReference>
<dbReference type="InterPro" id="IPR017244">
    <property type="entry name" value="23SrRNA_methyltr_KL"/>
</dbReference>
<dbReference type="InterPro" id="IPR002052">
    <property type="entry name" value="DNA_methylase_N6_adenine_CS"/>
</dbReference>
<dbReference type="InterPro" id="IPR000241">
    <property type="entry name" value="RlmKL-like_Mtase"/>
</dbReference>
<dbReference type="InterPro" id="IPR053943">
    <property type="entry name" value="RlmKL-like_Mtase_CS"/>
</dbReference>
<dbReference type="InterPro" id="IPR054170">
    <property type="entry name" value="RlmL_1st"/>
</dbReference>
<dbReference type="InterPro" id="IPR019614">
    <property type="entry name" value="SAM-dep_methyl-trfase"/>
</dbReference>
<dbReference type="InterPro" id="IPR029063">
    <property type="entry name" value="SAM-dependent_MTases_sf"/>
</dbReference>
<dbReference type="InterPro" id="IPR004114">
    <property type="entry name" value="THUMP_dom"/>
</dbReference>
<dbReference type="NCBIfam" id="NF008748">
    <property type="entry name" value="PRK11783.1"/>
    <property type="match status" value="1"/>
</dbReference>
<dbReference type="PANTHER" id="PTHR47313">
    <property type="entry name" value="RIBOSOMAL RNA LARGE SUBUNIT METHYLTRANSFERASE K/L"/>
    <property type="match status" value="1"/>
</dbReference>
<dbReference type="PANTHER" id="PTHR47313:SF1">
    <property type="entry name" value="RIBOSOMAL RNA LARGE SUBUNIT METHYLTRANSFERASE K_L"/>
    <property type="match status" value="1"/>
</dbReference>
<dbReference type="Pfam" id="PF10672">
    <property type="entry name" value="Methyltrans_SAM"/>
    <property type="match status" value="1"/>
</dbReference>
<dbReference type="Pfam" id="PF22020">
    <property type="entry name" value="RlmL_1st"/>
    <property type="match status" value="1"/>
</dbReference>
<dbReference type="Pfam" id="PF02926">
    <property type="entry name" value="THUMP"/>
    <property type="match status" value="1"/>
</dbReference>
<dbReference type="Pfam" id="PF01170">
    <property type="entry name" value="UPF0020"/>
    <property type="match status" value="1"/>
</dbReference>
<dbReference type="PIRSF" id="PIRSF037618">
    <property type="entry name" value="RNA_Mtase_bacteria_prd"/>
    <property type="match status" value="1"/>
</dbReference>
<dbReference type="SMART" id="SM00981">
    <property type="entry name" value="THUMP"/>
    <property type="match status" value="1"/>
</dbReference>
<dbReference type="SUPFAM" id="SSF53335">
    <property type="entry name" value="S-adenosyl-L-methionine-dependent methyltransferases"/>
    <property type="match status" value="2"/>
</dbReference>
<dbReference type="PROSITE" id="PS51165">
    <property type="entry name" value="THUMP"/>
    <property type="match status" value="1"/>
</dbReference>
<dbReference type="PROSITE" id="PS01261">
    <property type="entry name" value="UPF0020"/>
    <property type="match status" value="1"/>
</dbReference>
<sequence length="768" mass="86560">MTETTALASSTVSSAPLSLDLIITCADGLEAPLQTELTSFGIASEMKSTGRLAVTGTLRDLYKICLWSRVASRVLMLIKRKNINAEYDVAEQLYGLAKSVNWTEQFSLEQTFAIRLSVDKRVAVSQQFAMLRIKDAIADTFNEVYESRPNVDSKNPDFSIFATVNDKQAELYLDLSGTSLHRRGYRVAMTEAPLKENLAAALLYSAGWHQKNEAGDAPFYNALIDPMCGSGTFIIEALLMHCDYAVGIDKAANQFGFYEWQHHDAALWQEMIDDAQTRFRAALEIANEQPDTLPLIFGFDADNGAIIATEKNLIAAGLQDLLPLLDIETRALDQLSTLLKPLVADGRLSNPLIITNPPYGERLGDEEMIKPLYQSIGLILQDSFAGSGVDPMLGILASHVEQVDILPIREPKTLRCHNGAITVYFRYGTLIAGQTGNLVNRFEKREIEVEDGQDFINRLQKNLTRLKKLAKKDNVSNIRVYNADLPDFKVAIDLYGDYAHVQEYAPPKTIPPETAKKRFNLALMGIREVFGINREQIFIKTRARQSGNDQYSKQGNTEKRGKFYIAREDGAYLYVNFTDYLDTGLFIDHRNMRARIKDNSRNKSVLNLFAYTCTASVHAALAGAKKVTSVDLSQNYLDWGKQNFALNGLNVSGNKYQFVAADIFEWIKDNTEQFDIIFIDPPTFSNSKKFQGTFDVQRDHAALINRAMNRLTADGILYFSNNFTRFELDEQLTERYDIVDITQKTIGFDFDIKKPIHQSFEIRHRQSI</sequence>
<feature type="chain" id="PRO_0000366799" description="Ribosomal RNA large subunit methyltransferase K/L">
    <location>
        <begin position="1"/>
        <end position="768"/>
    </location>
</feature>
<feature type="domain" description="THUMP" evidence="1">
    <location>
        <begin position="60"/>
        <end position="175"/>
    </location>
</feature>
<organism>
    <name type="scientific">Psychrobacter arcticus (strain DSM 17307 / VKM B-2377 / 273-4)</name>
    <dbReference type="NCBI Taxonomy" id="259536"/>
    <lineage>
        <taxon>Bacteria</taxon>
        <taxon>Pseudomonadati</taxon>
        <taxon>Pseudomonadota</taxon>
        <taxon>Gammaproteobacteria</taxon>
        <taxon>Moraxellales</taxon>
        <taxon>Moraxellaceae</taxon>
        <taxon>Psychrobacter</taxon>
    </lineage>
</organism>
<gene>
    <name evidence="1" type="primary">rlmL</name>
    <name type="ordered locus">Psyc_0766</name>
</gene>
<protein>
    <recommendedName>
        <fullName evidence="1">Ribosomal RNA large subunit methyltransferase K/L</fullName>
    </recommendedName>
    <domain>
        <recommendedName>
            <fullName evidence="1">23S rRNA m2G2445 methyltransferase</fullName>
            <ecNumber evidence="1">2.1.1.173</ecNumber>
        </recommendedName>
        <alternativeName>
            <fullName evidence="1">rRNA (guanine-N(2)-)-methyltransferase RlmL</fullName>
        </alternativeName>
    </domain>
    <domain>
        <recommendedName>
            <fullName evidence="1">23S rRNA m7G2069 methyltransferase</fullName>
            <ecNumber evidence="1">2.1.1.264</ecNumber>
        </recommendedName>
        <alternativeName>
            <fullName evidence="1">rRNA (guanine-N(7)-)-methyltransferase RlmK</fullName>
        </alternativeName>
    </domain>
</protein>
<reference key="1">
    <citation type="journal article" date="2010" name="Appl. Environ. Microbiol.">
        <title>The genome sequence of Psychrobacter arcticus 273-4, a psychroactive Siberian permafrost bacterium, reveals mechanisms for adaptation to low-temperature growth.</title>
        <authorList>
            <person name="Ayala-del-Rio H.L."/>
            <person name="Chain P.S."/>
            <person name="Grzymski J.J."/>
            <person name="Ponder M.A."/>
            <person name="Ivanova N."/>
            <person name="Bergholz P.W."/>
            <person name="Di Bartolo G."/>
            <person name="Hauser L."/>
            <person name="Land M."/>
            <person name="Bakermans C."/>
            <person name="Rodrigues D."/>
            <person name="Klappenbach J."/>
            <person name="Zarka D."/>
            <person name="Larimer F."/>
            <person name="Richardson P."/>
            <person name="Murray A."/>
            <person name="Thomashow M."/>
            <person name="Tiedje J.M."/>
        </authorList>
    </citation>
    <scope>NUCLEOTIDE SEQUENCE [LARGE SCALE GENOMIC DNA]</scope>
    <source>
        <strain>DSM 17307 / VKM B-2377 / 273-4</strain>
    </source>
</reference>
<keyword id="KW-0963">Cytoplasm</keyword>
<keyword id="KW-0489">Methyltransferase</keyword>
<keyword id="KW-1185">Reference proteome</keyword>
<keyword id="KW-0694">RNA-binding</keyword>
<keyword id="KW-0698">rRNA processing</keyword>
<keyword id="KW-0949">S-adenosyl-L-methionine</keyword>
<keyword id="KW-0808">Transferase</keyword>